<sequence>MGKYCASLGVLKGPWDQVFAAFWQRYPNPYSKHVLTEDIVHREVTADHKLLSRRLLTKTNRMPRWAERFFPANVAHNVYIVEDSIVDPKNRTMTTFTWNINHARLMAVEERCVYRVNPENSSWTEVKREAWVSSSLFGVSRAVQEFGLARFKSNVTKSTKGFEYVLARMQGEAPSKTLVETAKEATEKAKETALAATEKAKDLASKAATKKKQFV</sequence>
<gene>
    <name type="primary">PRELID1</name>
</gene>
<name>PRLD1_CHICK</name>
<keyword id="KW-0053">Apoptosis</keyword>
<keyword id="KW-0445">Lipid transport</keyword>
<keyword id="KW-0496">Mitochondrion</keyword>
<keyword id="KW-1185">Reference proteome</keyword>
<keyword id="KW-0809">Transit peptide</keyword>
<keyword id="KW-0813">Transport</keyword>
<protein>
    <recommendedName>
        <fullName>PRELI domain-containing protein 1, mitochondrial</fullName>
    </recommendedName>
    <alternativeName>
        <fullName>Px19-like protein</fullName>
    </alternativeName>
</protein>
<feature type="transit peptide" description="Mitochondrion" evidence="1">
    <location>
        <begin position="1"/>
        <end status="unknown"/>
    </location>
</feature>
<feature type="chain" id="PRO_0000097118" description="PRELI domain-containing protein 1, mitochondrial">
    <location>
        <begin status="unknown"/>
        <end position="215"/>
    </location>
</feature>
<feature type="domain" description="PRELI/MSF1" evidence="2">
    <location>
        <begin position="36"/>
        <end position="174"/>
    </location>
</feature>
<proteinExistence type="evidence at transcript level"/>
<comment type="function">
    <text evidence="1 4">Involved in the modulation of the mitochondrial apoptotic pathway by ensuring the accumulation of cardiolipin (CL) in mitochondrial membranes. The TRIAP1:PRELID1 complex probably functions as a PA transporter across the mitochondrion intermembrane space to provide PA for CL synthesis in the inner membrane (By similarity). May be involved in hematopoiesis during avian development.</text>
</comment>
<comment type="catalytic activity">
    <reaction evidence="1">
        <text>a 1,2-diacyl-sn-glycero-3-phosphate(in) = a 1,2-diacyl-sn-glycero-3-phosphate(out)</text>
        <dbReference type="Rhea" id="RHEA:36435"/>
        <dbReference type="ChEBI" id="CHEBI:58608"/>
    </reaction>
</comment>
<comment type="subunit">
    <text evidence="1">Forms a complex with TRIAP1 in the mitochondrion intermembrane space.</text>
</comment>
<comment type="subcellular location">
    <subcellularLocation>
        <location evidence="1">Mitochondrion</location>
    </subcellularLocation>
    <subcellularLocation>
        <location evidence="1">Mitochondrion intermembrane space</location>
    </subcellularLocation>
</comment>
<comment type="tissue specificity">
    <text evidence="3">Expressed within the blood islands and in the liver.</text>
</comment>
<comment type="developmental stage">
    <text evidence="3">Restricted to developing blood cells.</text>
</comment>
<dbReference type="EMBL" id="U31977">
    <property type="protein sequence ID" value="AAC60046.1"/>
    <property type="molecule type" value="mRNA"/>
</dbReference>
<dbReference type="PIR" id="JC5048">
    <property type="entry name" value="JC5048"/>
</dbReference>
<dbReference type="SMR" id="Q90673"/>
<dbReference type="FunCoup" id="Q90673">
    <property type="interactions" value="2949"/>
</dbReference>
<dbReference type="STRING" id="9031.ENSGALP00000004724"/>
<dbReference type="PaxDb" id="9031-ENSGALP00000004724"/>
<dbReference type="VEuPathDB" id="HostDB:geneid_395819"/>
<dbReference type="eggNOG" id="KOG3337">
    <property type="taxonomic scope" value="Eukaryota"/>
</dbReference>
<dbReference type="InParanoid" id="Q90673"/>
<dbReference type="OrthoDB" id="341300at2759"/>
<dbReference type="PhylomeDB" id="Q90673"/>
<dbReference type="Proteomes" id="UP000000539">
    <property type="component" value="Unassembled WGS sequence"/>
</dbReference>
<dbReference type="GO" id="GO:0005758">
    <property type="term" value="C:mitochondrial intermembrane space"/>
    <property type="evidence" value="ECO:0000318"/>
    <property type="project" value="GO_Central"/>
</dbReference>
<dbReference type="GO" id="GO:0005739">
    <property type="term" value="C:mitochondrion"/>
    <property type="evidence" value="ECO:0000250"/>
    <property type="project" value="UniProtKB"/>
</dbReference>
<dbReference type="GO" id="GO:1990050">
    <property type="term" value="F:phosphatidic acid transfer activity"/>
    <property type="evidence" value="ECO:0000318"/>
    <property type="project" value="GO_Central"/>
</dbReference>
<dbReference type="GO" id="GO:0006915">
    <property type="term" value="P:apoptotic process"/>
    <property type="evidence" value="ECO:0007669"/>
    <property type="project" value="UniProtKB-KW"/>
</dbReference>
<dbReference type="GO" id="GO:0015914">
    <property type="term" value="P:phospholipid transport"/>
    <property type="evidence" value="ECO:0000318"/>
    <property type="project" value="GO_Central"/>
</dbReference>
<dbReference type="InterPro" id="IPR006797">
    <property type="entry name" value="PRELI/MSF1_dom"/>
</dbReference>
<dbReference type="InterPro" id="IPR037365">
    <property type="entry name" value="Slowmo/Ups"/>
</dbReference>
<dbReference type="PANTHER" id="PTHR11158">
    <property type="entry name" value="MSF1/PX19 RELATED"/>
    <property type="match status" value="1"/>
</dbReference>
<dbReference type="Pfam" id="PF04707">
    <property type="entry name" value="PRELI"/>
    <property type="match status" value="1"/>
</dbReference>
<dbReference type="PROSITE" id="PS50904">
    <property type="entry name" value="PRELI_MSF1"/>
    <property type="match status" value="1"/>
</dbReference>
<organism>
    <name type="scientific">Gallus gallus</name>
    <name type="common">Chicken</name>
    <dbReference type="NCBI Taxonomy" id="9031"/>
    <lineage>
        <taxon>Eukaryota</taxon>
        <taxon>Metazoa</taxon>
        <taxon>Chordata</taxon>
        <taxon>Craniata</taxon>
        <taxon>Vertebrata</taxon>
        <taxon>Euteleostomi</taxon>
        <taxon>Archelosauria</taxon>
        <taxon>Archosauria</taxon>
        <taxon>Dinosauria</taxon>
        <taxon>Saurischia</taxon>
        <taxon>Theropoda</taxon>
        <taxon>Coelurosauria</taxon>
        <taxon>Aves</taxon>
        <taxon>Neognathae</taxon>
        <taxon>Galloanserae</taxon>
        <taxon>Galliformes</taxon>
        <taxon>Phasianidae</taxon>
        <taxon>Phasianinae</taxon>
        <taxon>Gallus</taxon>
    </lineage>
</organism>
<evidence type="ECO:0000250" key="1">
    <source>
        <dbReference type="UniProtKB" id="Q9Y255"/>
    </source>
</evidence>
<evidence type="ECO:0000255" key="2">
    <source>
        <dbReference type="PROSITE-ProRule" id="PRU00158"/>
    </source>
</evidence>
<evidence type="ECO:0000269" key="3">
    <source>
    </source>
</evidence>
<evidence type="ECO:0000305" key="4">
    <source>
    </source>
</evidence>
<accession>Q90673</accession>
<reference key="1">
    <citation type="journal article" date="1996" name="Gene">
        <title>Cloning and sequencing of a developmentally regulated avian mRNA containing the LEA motif found in plant seed proteins.</title>
        <authorList>
            <person name="Niu S."/>
            <person name="Antin P.B."/>
            <person name="Morkin E."/>
        </authorList>
    </citation>
    <scope>NUCLEOTIDE SEQUENCE [MRNA]</scope>
    <scope>TISSUE SPECIFICITY</scope>
    <scope>DEVELOPMENTAL STAGE</scope>
    <scope>FUNCTION</scope>
    <source>
        <tissue>Heart</tissue>
    </source>
</reference>